<proteinExistence type="inferred from homology"/>
<accession>A0A0G4KL96</accession>
<reference key="1">
    <citation type="submission" date="2015-05" db="EMBL/GenBank/DDBJ databases">
        <authorList>
            <person name="Wang D.B."/>
            <person name="Wang M."/>
        </authorList>
    </citation>
    <scope>NUCLEOTIDE SEQUENCE [LARGE SCALE GENOMIC DNA]</scope>
    <source>
        <strain>VL1</strain>
    </source>
</reference>
<reference key="2">
    <citation type="journal article" date="2018" name="BMC Genomics">
        <title>Analysis of the hybrid genomes of two field isolates of the soil-borne fungal species Verticillium longisporum.</title>
        <authorList>
            <person name="Fogelqvist J."/>
            <person name="Tzelepis G."/>
            <person name="Bejai S."/>
            <person name="Ilbaeck J."/>
            <person name="Schwelm A."/>
            <person name="Dixelius C."/>
        </authorList>
    </citation>
    <scope>NUCLEOTIDE SEQUENCE [LARGE SCALE GENOMIC DNA]</scope>
    <source>
        <strain>VL1</strain>
    </source>
</reference>
<reference key="3">
    <citation type="journal article" date="2021" name="J. Integr. Plant Biol.">
        <title>Nicotiana benthamiana LRR-RLP NbEIX2 mediates the perception of an EIX-like protein from Verticillium dahliae.</title>
        <authorList>
            <person name="Yin Z."/>
            <person name="Wang N."/>
            <person name="Pi L."/>
            <person name="Li L."/>
            <person name="Duan W."/>
            <person name="Wang X."/>
            <person name="Dou D."/>
        </authorList>
    </citation>
    <scope>FUNCTION</scope>
</reference>
<protein>
    <recommendedName>
        <fullName evidence="6">Ethylene-inducing xylanase 3</fullName>
        <shortName evidence="6">EIX3</shortName>
        <ecNumber evidence="4">3.2.1.8</ecNumber>
    </recommendedName>
    <alternativeName>
        <fullName evidence="6">Endo-1,4-beta-xylanase EIX3</fullName>
    </alternativeName>
</protein>
<comment type="function">
    <text evidence="1 5">Endo-1,4-beta-xylanase involved in the hydrolysis of xylan, a major structural heterogeneous polysaccharide found in plant biomass representing the second most abundant polysaccharide in the biosphere, after cellulose (By similarity). Exhibits immunity-inducing activity and induces cell death in Nicotiana benthamiana (PubMed:33205907).</text>
</comment>
<comment type="catalytic activity">
    <reaction evidence="4">
        <text>Endohydrolysis of (1-&gt;4)-beta-D-xylosidic linkages in xylans.</text>
        <dbReference type="EC" id="3.2.1.8"/>
    </reaction>
</comment>
<comment type="pathway">
    <text evidence="4">Glycan degradation; xylan degradation.</text>
</comment>
<comment type="similarity">
    <text evidence="4">Belongs to the glycosyl hydrolase 11 (cellulase G) family.</text>
</comment>
<organism>
    <name type="scientific">Verticillium longisporum</name>
    <name type="common">Verticillium dahliae var. longisporum</name>
    <dbReference type="NCBI Taxonomy" id="100787"/>
    <lineage>
        <taxon>Eukaryota</taxon>
        <taxon>Fungi</taxon>
        <taxon>Dikarya</taxon>
        <taxon>Ascomycota</taxon>
        <taxon>Pezizomycotina</taxon>
        <taxon>Sordariomycetes</taxon>
        <taxon>Hypocreomycetidae</taxon>
        <taxon>Glomerellales</taxon>
        <taxon>Plectosphaerellaceae</taxon>
        <taxon>Verticillium</taxon>
    </lineage>
</organism>
<sequence>MVCFSSLFVAASAIAVVFASPVDHEQLAKRQSTPSSQGTHDGYFYSWWTDGGAAATYTNLAGGEYSVSWSNGGNLVGGKGWNPGSARTITYSGTYNPNGNSYLAVYGWTRNPLVEYYVVENFGTYNPSSGATARGQVTHDGALYRLFESTRTNQPSIDGTATFQQYWAVRDVKRTGGTVNMATFFNAWTSAGMRLGTHNYQVVATEGYFSSGSARINVAGGGGSTPSPPSTPSPPTTPSPPPVTPPPSGGGSCAARWGQCGGSGWNGATCCSAGTCQAQNQWYSQCL</sequence>
<dbReference type="EC" id="3.2.1.8" evidence="4"/>
<dbReference type="EMBL" id="CVQH01002224">
    <property type="protein sequence ID" value="CRK09482.1"/>
    <property type="molecule type" value="Genomic_DNA"/>
</dbReference>
<dbReference type="UniPathway" id="UPA00114"/>
<dbReference type="Proteomes" id="UP000044602">
    <property type="component" value="Unassembled WGS sequence"/>
</dbReference>
<dbReference type="GO" id="GO:0005576">
    <property type="term" value="C:extracellular region"/>
    <property type="evidence" value="ECO:0007669"/>
    <property type="project" value="InterPro"/>
</dbReference>
<dbReference type="GO" id="GO:0030248">
    <property type="term" value="F:cellulose binding"/>
    <property type="evidence" value="ECO:0007669"/>
    <property type="project" value="InterPro"/>
</dbReference>
<dbReference type="GO" id="GO:0031176">
    <property type="term" value="F:endo-1,4-beta-xylanase activity"/>
    <property type="evidence" value="ECO:0007669"/>
    <property type="project" value="UniProtKB-UniRule"/>
</dbReference>
<dbReference type="GO" id="GO:0045493">
    <property type="term" value="P:xylan catabolic process"/>
    <property type="evidence" value="ECO:0007669"/>
    <property type="project" value="UniProtKB-UniRule"/>
</dbReference>
<dbReference type="FunFam" id="2.60.120.180:FF:000001">
    <property type="entry name" value="Endo-1,4-beta-xylanase"/>
    <property type="match status" value="1"/>
</dbReference>
<dbReference type="Gene3D" id="2.60.120.180">
    <property type="match status" value="1"/>
</dbReference>
<dbReference type="InterPro" id="IPR035971">
    <property type="entry name" value="CBD_sf"/>
</dbReference>
<dbReference type="InterPro" id="IPR000254">
    <property type="entry name" value="Cellulose-bd_dom_fun"/>
</dbReference>
<dbReference type="InterPro" id="IPR013320">
    <property type="entry name" value="ConA-like_dom_sf"/>
</dbReference>
<dbReference type="InterPro" id="IPR013319">
    <property type="entry name" value="GH11/12"/>
</dbReference>
<dbReference type="InterPro" id="IPR018208">
    <property type="entry name" value="GH11_AS_1"/>
</dbReference>
<dbReference type="InterPro" id="IPR033119">
    <property type="entry name" value="GH11_AS_2"/>
</dbReference>
<dbReference type="InterPro" id="IPR033123">
    <property type="entry name" value="GH11_dom"/>
</dbReference>
<dbReference type="InterPro" id="IPR001137">
    <property type="entry name" value="Glyco_hydro_11"/>
</dbReference>
<dbReference type="PANTHER" id="PTHR46828:SF3">
    <property type="entry name" value="ENDO-1,4-BETA-XYLANASE"/>
    <property type="match status" value="1"/>
</dbReference>
<dbReference type="PANTHER" id="PTHR46828">
    <property type="entry name" value="ENDO-1,4-BETA-XYLANASE A-RELATED"/>
    <property type="match status" value="1"/>
</dbReference>
<dbReference type="Pfam" id="PF00734">
    <property type="entry name" value="CBM_1"/>
    <property type="match status" value="1"/>
</dbReference>
<dbReference type="Pfam" id="PF00457">
    <property type="entry name" value="Glyco_hydro_11"/>
    <property type="match status" value="1"/>
</dbReference>
<dbReference type="PRINTS" id="PR00911">
    <property type="entry name" value="GLHYDRLASE11"/>
</dbReference>
<dbReference type="SMART" id="SM00236">
    <property type="entry name" value="fCBD"/>
    <property type="match status" value="1"/>
</dbReference>
<dbReference type="SUPFAM" id="SSF57180">
    <property type="entry name" value="Cellulose-binding domain"/>
    <property type="match status" value="1"/>
</dbReference>
<dbReference type="SUPFAM" id="SSF49899">
    <property type="entry name" value="Concanavalin A-like lectins/glucanases"/>
    <property type="match status" value="1"/>
</dbReference>
<dbReference type="PROSITE" id="PS00562">
    <property type="entry name" value="CBM1_1"/>
    <property type="match status" value="1"/>
</dbReference>
<dbReference type="PROSITE" id="PS51164">
    <property type="entry name" value="CBM1_2"/>
    <property type="match status" value="1"/>
</dbReference>
<dbReference type="PROSITE" id="PS00776">
    <property type="entry name" value="GH11_1"/>
    <property type="match status" value="1"/>
</dbReference>
<dbReference type="PROSITE" id="PS00777">
    <property type="entry name" value="GH11_2"/>
    <property type="match status" value="1"/>
</dbReference>
<dbReference type="PROSITE" id="PS51761">
    <property type="entry name" value="GH11_3"/>
    <property type="match status" value="1"/>
</dbReference>
<gene>
    <name evidence="6" type="primary">EIX3</name>
    <name type="ORF">BN1708_002170</name>
</gene>
<keyword id="KW-0119">Carbohydrate metabolism</keyword>
<keyword id="KW-0326">Glycosidase</keyword>
<keyword id="KW-0378">Hydrolase</keyword>
<keyword id="KW-0624">Polysaccharide degradation</keyword>
<keyword id="KW-1185">Reference proteome</keyword>
<keyword id="KW-0732">Signal</keyword>
<keyword id="KW-0858">Xylan degradation</keyword>
<name>EIX3_VERLO</name>
<feature type="signal peptide" evidence="2">
    <location>
        <begin position="1"/>
        <end position="19"/>
    </location>
</feature>
<feature type="chain" id="PRO_5002565593" description="Ethylene-inducing xylanase 3">
    <location>
        <begin position="20"/>
        <end position="287"/>
    </location>
</feature>
<feature type="domain" description="GH11" evidence="4">
    <location>
        <begin position="31"/>
        <end position="219"/>
    </location>
</feature>
<feature type="domain" description="CBM1" evidence="3">
    <location>
        <begin position="252"/>
        <end position="287"/>
    </location>
</feature>
<feature type="active site" description="Nucleophile" evidence="4">
    <location>
        <position position="115"/>
    </location>
</feature>
<feature type="active site" description="Proton donor" evidence="4">
    <location>
        <position position="206"/>
    </location>
</feature>
<evidence type="ECO:0000250" key="1">
    <source>
        <dbReference type="UniProtKB" id="B3VSG7"/>
    </source>
</evidence>
<evidence type="ECO:0000255" key="2"/>
<evidence type="ECO:0000255" key="3">
    <source>
        <dbReference type="PROSITE-ProRule" id="PRU00597"/>
    </source>
</evidence>
<evidence type="ECO:0000255" key="4">
    <source>
        <dbReference type="PROSITE-ProRule" id="PRU01097"/>
    </source>
</evidence>
<evidence type="ECO:0000269" key="5">
    <source>
    </source>
</evidence>
<evidence type="ECO:0000303" key="6">
    <source>
    </source>
</evidence>